<organism>
    <name type="scientific">Cronobacter sakazakii (strain ATCC BAA-894)</name>
    <name type="common">Enterobacter sakazakii</name>
    <dbReference type="NCBI Taxonomy" id="290339"/>
    <lineage>
        <taxon>Bacteria</taxon>
        <taxon>Pseudomonadati</taxon>
        <taxon>Pseudomonadota</taxon>
        <taxon>Gammaproteobacteria</taxon>
        <taxon>Enterobacterales</taxon>
        <taxon>Enterobacteriaceae</taxon>
        <taxon>Cronobacter</taxon>
    </lineage>
</organism>
<gene>
    <name evidence="1" type="primary">tusB</name>
    <name type="ordered locus">ESA_04398</name>
</gene>
<evidence type="ECO:0000255" key="1">
    <source>
        <dbReference type="HAMAP-Rule" id="MF_01564"/>
    </source>
</evidence>
<comment type="function">
    <text evidence="1">Part of a sulfur-relay system required for 2-thiolation of 5-methylaminomethyl-2-thiouridine (mnm(5)s(2)U) at tRNA wobble positions.</text>
</comment>
<comment type="subunit">
    <text evidence="1">Heterohexamer, formed by a dimer of trimers. The hexameric TusBCD complex contains 2 copies each of TusB, TusC and TusD. The TusBCD complex interacts with TusE.</text>
</comment>
<comment type="subcellular location">
    <subcellularLocation>
        <location evidence="1">Cytoplasm</location>
    </subcellularLocation>
</comment>
<comment type="similarity">
    <text evidence="1">Belongs to the DsrH/TusB family.</text>
</comment>
<keyword id="KW-0963">Cytoplasm</keyword>
<keyword id="KW-1185">Reference proteome</keyword>
<keyword id="KW-0819">tRNA processing</keyword>
<protein>
    <recommendedName>
        <fullName evidence="1">Protein TusB</fullName>
    </recommendedName>
    <alternativeName>
        <fullName evidence="1">tRNA 2-thiouridine synthesizing protein B</fullName>
    </alternativeName>
</protein>
<sequence length="95" mass="10479">MLYTLSRSPWQVDIHALLRLVRSGDDILLMQNGVVAALHDSRYVAVLLASPARVVALENDVEARGLVAQISSSIDTISYTEFVNLTVKHASQMAW</sequence>
<dbReference type="EMBL" id="CP000783">
    <property type="protein sequence ID" value="ABU79577.1"/>
    <property type="molecule type" value="Genomic_DNA"/>
</dbReference>
<dbReference type="RefSeq" id="WP_012126418.1">
    <property type="nucleotide sequence ID" value="NC_009778.1"/>
</dbReference>
<dbReference type="SMR" id="A7MKJ0"/>
<dbReference type="KEGG" id="esa:ESA_04398"/>
<dbReference type="PATRIC" id="fig|290339.8.peg.3921"/>
<dbReference type="HOGENOM" id="CLU_166087_2_1_6"/>
<dbReference type="Proteomes" id="UP000000260">
    <property type="component" value="Chromosome"/>
</dbReference>
<dbReference type="GO" id="GO:1990228">
    <property type="term" value="C:sulfurtransferase complex"/>
    <property type="evidence" value="ECO:0007669"/>
    <property type="project" value="TreeGrafter"/>
</dbReference>
<dbReference type="GO" id="GO:0002143">
    <property type="term" value="P:tRNA wobble position uridine thiolation"/>
    <property type="evidence" value="ECO:0007669"/>
    <property type="project" value="InterPro"/>
</dbReference>
<dbReference type="Gene3D" id="3.40.1260.10">
    <property type="entry name" value="DsrEFH-like"/>
    <property type="match status" value="1"/>
</dbReference>
<dbReference type="HAMAP" id="MF_01564">
    <property type="entry name" value="Thiourid_synth_B"/>
    <property type="match status" value="1"/>
</dbReference>
<dbReference type="InterPro" id="IPR027396">
    <property type="entry name" value="DsrEFH-like"/>
</dbReference>
<dbReference type="InterPro" id="IPR023526">
    <property type="entry name" value="Sulphur_relay_TusB"/>
</dbReference>
<dbReference type="InterPro" id="IPR007215">
    <property type="entry name" value="Sulphur_relay_TusB/DsrH"/>
</dbReference>
<dbReference type="NCBIfam" id="NF010035">
    <property type="entry name" value="PRK13510.1"/>
    <property type="match status" value="1"/>
</dbReference>
<dbReference type="NCBIfam" id="TIGR03011">
    <property type="entry name" value="sulf_tusB_dsrH"/>
    <property type="match status" value="1"/>
</dbReference>
<dbReference type="PANTHER" id="PTHR37526">
    <property type="entry name" value="PROTEIN TUSB"/>
    <property type="match status" value="1"/>
</dbReference>
<dbReference type="PANTHER" id="PTHR37526:SF1">
    <property type="entry name" value="PROTEIN TUSB"/>
    <property type="match status" value="1"/>
</dbReference>
<dbReference type="Pfam" id="PF04077">
    <property type="entry name" value="DsrH"/>
    <property type="match status" value="1"/>
</dbReference>
<dbReference type="SUPFAM" id="SSF75169">
    <property type="entry name" value="DsrEFH-like"/>
    <property type="match status" value="1"/>
</dbReference>
<accession>A7MKJ0</accession>
<feature type="chain" id="PRO_1000069058" description="Protein TusB">
    <location>
        <begin position="1"/>
        <end position="95"/>
    </location>
</feature>
<proteinExistence type="inferred from homology"/>
<reference key="1">
    <citation type="journal article" date="2010" name="PLoS ONE">
        <title>Genome sequence of Cronobacter sakazakii BAA-894 and comparative genomic hybridization analysis with other Cronobacter species.</title>
        <authorList>
            <person name="Kucerova E."/>
            <person name="Clifton S.W."/>
            <person name="Xia X.Q."/>
            <person name="Long F."/>
            <person name="Porwollik S."/>
            <person name="Fulton L."/>
            <person name="Fronick C."/>
            <person name="Minx P."/>
            <person name="Kyung K."/>
            <person name="Warren W."/>
            <person name="Fulton R."/>
            <person name="Feng D."/>
            <person name="Wollam A."/>
            <person name="Shah N."/>
            <person name="Bhonagiri V."/>
            <person name="Nash W.E."/>
            <person name="Hallsworth-Pepin K."/>
            <person name="Wilson R.K."/>
            <person name="McClelland M."/>
            <person name="Forsythe S.J."/>
        </authorList>
    </citation>
    <scope>NUCLEOTIDE SEQUENCE [LARGE SCALE GENOMIC DNA]</scope>
    <source>
        <strain>ATCC BAA-894</strain>
    </source>
</reference>
<name>TUSB_CROS8</name>